<evidence type="ECO:0000250" key="1"/>
<evidence type="ECO:0000250" key="2">
    <source>
        <dbReference type="UniProtKB" id="O35775"/>
    </source>
</evidence>
<gene>
    <name type="primary">SYCN</name>
    <name type="synonym">INSSA1</name>
    <name type="synonym">SYL</name>
</gene>
<keyword id="KW-0968">Cytoplasmic vesicle</keyword>
<keyword id="KW-1015">Disulfide bond</keyword>
<keyword id="KW-0268">Exocytosis</keyword>
<keyword id="KW-0472">Membrane</keyword>
<keyword id="KW-1267">Proteomics identification</keyword>
<keyword id="KW-1185">Reference proteome</keyword>
<keyword id="KW-0732">Signal</keyword>
<comment type="function">
    <text evidence="1">Functions in exocytosis in pancreatic acinar cells regulating the fusion of zymogen granules with each other. May have a pore-forming activity on membranes and regulate exocytosis in other exocrine tissues (By similarity).</text>
</comment>
<comment type="subunit">
    <text evidence="1">Monomer and homooligomer; most probably hexameric. Interacts with GP2 (By similarity).</text>
</comment>
<comment type="interaction">
    <interactant intactId="EBI-20898442">
        <id>Q0VAF6</id>
    </interactant>
    <interactant intactId="EBI-704197">
        <id>O00170</id>
        <label>AIP</label>
    </interactant>
    <organismsDiffer>false</organismsDiffer>
    <experiments>2</experiments>
</comment>
<comment type="subcellular location">
    <subcellularLocation>
        <location evidence="2">Zymogen granule membrane</location>
        <topology evidence="2">Peripheral membrane protein</topology>
        <orientation evidence="2">Lumenal side</orientation>
    </subcellularLocation>
    <subcellularLocation>
        <location evidence="2">Zymogen granule lumen</location>
    </subcellularLocation>
    <text evidence="2">Associated in a cholesterol-dependent manner with lipid rafts of zymogen granule membranes.</text>
</comment>
<comment type="PTM">
    <text evidence="1">Contains intrachain disulfide bonds.</text>
</comment>
<name>SYCN_HUMAN</name>
<dbReference type="EMBL" id="BC121075">
    <property type="protein sequence ID" value="AAI21076.1"/>
    <property type="molecule type" value="mRNA"/>
</dbReference>
<dbReference type="EMBL" id="BC121076">
    <property type="protein sequence ID" value="AAI21077.1"/>
    <property type="molecule type" value="mRNA"/>
</dbReference>
<dbReference type="CCDS" id="CCDS46070.1"/>
<dbReference type="RefSeq" id="NP_001073937.1">
    <property type="nucleotide sequence ID" value="NM_001080468.4"/>
</dbReference>
<dbReference type="SMR" id="Q0VAF6"/>
<dbReference type="BioGRID" id="131205">
    <property type="interactions" value="8"/>
</dbReference>
<dbReference type="FunCoup" id="Q0VAF6">
    <property type="interactions" value="16"/>
</dbReference>
<dbReference type="IntAct" id="Q0VAF6">
    <property type="interactions" value="7"/>
</dbReference>
<dbReference type="STRING" id="9606.ENSP00000325564"/>
<dbReference type="iPTMnet" id="Q0VAF6"/>
<dbReference type="PhosphoSitePlus" id="Q0VAF6"/>
<dbReference type="BioMuta" id="SYCN"/>
<dbReference type="DMDM" id="121948659"/>
<dbReference type="MassIVE" id="Q0VAF6"/>
<dbReference type="PaxDb" id="9606-ENSP00000325564"/>
<dbReference type="PeptideAtlas" id="Q0VAF6"/>
<dbReference type="ProteomicsDB" id="58794"/>
<dbReference type="TopDownProteomics" id="Q0VAF6"/>
<dbReference type="Antibodypedia" id="30273">
    <property type="antibodies" value="77 antibodies from 15 providers"/>
</dbReference>
<dbReference type="DNASU" id="342898"/>
<dbReference type="Ensembl" id="ENST00000318438.7">
    <property type="protein sequence ID" value="ENSP00000325564.6"/>
    <property type="gene ID" value="ENSG00000179751.7"/>
</dbReference>
<dbReference type="GeneID" id="342898"/>
<dbReference type="KEGG" id="hsa:342898"/>
<dbReference type="MANE-Select" id="ENST00000318438.7">
    <property type="protein sequence ID" value="ENSP00000325564.6"/>
    <property type="RefSeq nucleotide sequence ID" value="NM_001080468.4"/>
    <property type="RefSeq protein sequence ID" value="NP_001073937.1"/>
</dbReference>
<dbReference type="UCSC" id="uc002okr.3">
    <property type="organism name" value="human"/>
</dbReference>
<dbReference type="AGR" id="HGNC:18442"/>
<dbReference type="CTD" id="342898"/>
<dbReference type="DisGeNET" id="342898"/>
<dbReference type="GeneCards" id="SYCN"/>
<dbReference type="HGNC" id="HGNC:18442">
    <property type="gene designation" value="SYCN"/>
</dbReference>
<dbReference type="HPA" id="ENSG00000179751">
    <property type="expression patterns" value="Tissue enriched (pancreas)"/>
</dbReference>
<dbReference type="MIM" id="620140">
    <property type="type" value="gene"/>
</dbReference>
<dbReference type="neXtProt" id="NX_Q0VAF6"/>
<dbReference type="OpenTargets" id="ENSG00000179751"/>
<dbReference type="PharmGKB" id="PA142670850"/>
<dbReference type="VEuPathDB" id="HostDB:ENSG00000179751"/>
<dbReference type="eggNOG" id="ENOG502S3UP">
    <property type="taxonomic scope" value="Eukaryota"/>
</dbReference>
<dbReference type="GeneTree" id="ENSGT00390000014835"/>
<dbReference type="HOGENOM" id="CLU_1890586_0_0_1"/>
<dbReference type="InParanoid" id="Q0VAF6"/>
<dbReference type="OMA" id="ALYCRCS"/>
<dbReference type="OrthoDB" id="9947298at2759"/>
<dbReference type="PAN-GO" id="Q0VAF6">
    <property type="GO annotations" value="1 GO annotation based on evolutionary models"/>
</dbReference>
<dbReference type="PhylomeDB" id="Q0VAF6"/>
<dbReference type="TreeFam" id="TF338021"/>
<dbReference type="PathwayCommons" id="Q0VAF6"/>
<dbReference type="Reactome" id="R-HSA-9925561">
    <property type="pathway name" value="Developmental Lineage of Pancreatic Acinar Cells"/>
</dbReference>
<dbReference type="SignaLink" id="Q0VAF6"/>
<dbReference type="BioGRID-ORCS" id="342898">
    <property type="hits" value="12 hits in 1153 CRISPR screens"/>
</dbReference>
<dbReference type="GenomeRNAi" id="342898"/>
<dbReference type="Pharos" id="Q0VAF6">
    <property type="development level" value="Tbio"/>
</dbReference>
<dbReference type="PRO" id="PR:Q0VAF6"/>
<dbReference type="Proteomes" id="UP000005640">
    <property type="component" value="Chromosome 19"/>
</dbReference>
<dbReference type="RNAct" id="Q0VAF6">
    <property type="molecule type" value="protein"/>
</dbReference>
<dbReference type="Bgee" id="ENSG00000179751">
    <property type="expression patterns" value="Expressed in body of pancreas and 86 other cell types or tissues"/>
</dbReference>
<dbReference type="GO" id="GO:0042589">
    <property type="term" value="C:zymogen granule membrane"/>
    <property type="evidence" value="ECO:0007669"/>
    <property type="project" value="UniProtKB-SubCell"/>
</dbReference>
<dbReference type="GO" id="GO:0006887">
    <property type="term" value="P:exocytosis"/>
    <property type="evidence" value="ECO:0007669"/>
    <property type="project" value="UniProtKB-KW"/>
</dbReference>
<dbReference type="FunFam" id="2.60.20.10:FF:000014">
    <property type="entry name" value="Syncollin"/>
    <property type="match status" value="1"/>
</dbReference>
<dbReference type="Gene3D" id="2.60.20.10">
    <property type="entry name" value="Crystallins"/>
    <property type="match status" value="1"/>
</dbReference>
<dbReference type="InterPro" id="IPR028137">
    <property type="entry name" value="Syncollin"/>
</dbReference>
<dbReference type="PANTHER" id="PTHR17503">
    <property type="entry name" value="SYNCOLLIN"/>
    <property type="match status" value="1"/>
</dbReference>
<dbReference type="PANTHER" id="PTHR17503:SF0">
    <property type="entry name" value="SYNCOLLIN"/>
    <property type="match status" value="1"/>
</dbReference>
<dbReference type="Pfam" id="PF15138">
    <property type="entry name" value="Syncollin"/>
    <property type="match status" value="1"/>
</dbReference>
<organism>
    <name type="scientific">Homo sapiens</name>
    <name type="common">Human</name>
    <dbReference type="NCBI Taxonomy" id="9606"/>
    <lineage>
        <taxon>Eukaryota</taxon>
        <taxon>Metazoa</taxon>
        <taxon>Chordata</taxon>
        <taxon>Craniata</taxon>
        <taxon>Vertebrata</taxon>
        <taxon>Euteleostomi</taxon>
        <taxon>Mammalia</taxon>
        <taxon>Eutheria</taxon>
        <taxon>Euarchontoglires</taxon>
        <taxon>Primates</taxon>
        <taxon>Haplorrhini</taxon>
        <taxon>Catarrhini</taxon>
        <taxon>Hominidae</taxon>
        <taxon>Homo</taxon>
    </lineage>
</organism>
<accession>Q0VAF6</accession>
<protein>
    <recommendedName>
        <fullName>Syncollin</fullName>
    </recommendedName>
    <alternativeName>
        <fullName>Insulin synthesis-associated protein 1</fullName>
    </alternativeName>
</protein>
<proteinExistence type="evidence at protein level"/>
<sequence>MSPLRPLLLALALASVPCAQGACPASADLKHSDGTRTCAKLYDKSDPYYENCCGGAELSLESGADLPYLPSNWANTASSLVVAPRCELTVWSRQGKAGKTHKFSAGTYPRLEEYRRGILGDWSNAISALYCRCS</sequence>
<reference key="1">
    <citation type="journal article" date="2004" name="Genome Res.">
        <title>The status, quality, and expansion of the NIH full-length cDNA project: the Mammalian Gene Collection (MGC).</title>
        <authorList>
            <consortium name="The MGC Project Team"/>
        </authorList>
    </citation>
    <scope>NUCLEOTIDE SEQUENCE [LARGE SCALE MRNA]</scope>
</reference>
<feature type="signal peptide" evidence="1">
    <location>
        <begin position="1"/>
        <end position="21"/>
    </location>
</feature>
<feature type="chain" id="PRO_0000295276" description="Syncollin" evidence="1">
    <location>
        <begin position="22"/>
        <end position="134"/>
    </location>
</feature>
<feature type="sequence variant" id="VAR_033284" description="In dbSNP:rs2082416.">
    <original>L</original>
    <variation>M</variation>
    <location>
        <position position="111"/>
    </location>
</feature>